<evidence type="ECO:0000255" key="1">
    <source>
        <dbReference type="HAMAP-Rule" id="MF_00598"/>
    </source>
</evidence>
<accession>Q0I0R9</accession>
<reference key="1">
    <citation type="submission" date="2006-08" db="EMBL/GenBank/DDBJ databases">
        <title>Complete sequence of chromosome 1 of Shewanella sp. MR-7.</title>
        <authorList>
            <person name="Copeland A."/>
            <person name="Lucas S."/>
            <person name="Lapidus A."/>
            <person name="Barry K."/>
            <person name="Detter J.C."/>
            <person name="Glavina del Rio T."/>
            <person name="Hammon N."/>
            <person name="Israni S."/>
            <person name="Dalin E."/>
            <person name="Tice H."/>
            <person name="Pitluck S."/>
            <person name="Kiss H."/>
            <person name="Brettin T."/>
            <person name="Bruce D."/>
            <person name="Han C."/>
            <person name="Tapia R."/>
            <person name="Gilna P."/>
            <person name="Schmutz J."/>
            <person name="Larimer F."/>
            <person name="Land M."/>
            <person name="Hauser L."/>
            <person name="Kyrpides N."/>
            <person name="Mikhailova N."/>
            <person name="Nealson K."/>
            <person name="Konstantinidis K."/>
            <person name="Klappenbach J."/>
            <person name="Tiedje J."/>
            <person name="Richardson P."/>
        </authorList>
    </citation>
    <scope>NUCLEOTIDE SEQUENCE [LARGE SCALE GENOMIC DNA]</scope>
    <source>
        <strain>MR-7</strain>
    </source>
</reference>
<dbReference type="EMBL" id="CP000444">
    <property type="protein sequence ID" value="ABI41036.1"/>
    <property type="molecule type" value="Genomic_DNA"/>
</dbReference>
<dbReference type="SMR" id="Q0I0R9"/>
<dbReference type="KEGG" id="shm:Shewmr7_0030"/>
<dbReference type="HOGENOM" id="CLU_133242_0_0_6"/>
<dbReference type="HAMAP" id="MF_00598">
    <property type="entry name" value="Smg"/>
    <property type="match status" value="1"/>
</dbReference>
<dbReference type="InterPro" id="IPR007456">
    <property type="entry name" value="Smg"/>
</dbReference>
<dbReference type="NCBIfam" id="NF002897">
    <property type="entry name" value="PRK03430.1"/>
    <property type="match status" value="1"/>
</dbReference>
<dbReference type="PANTHER" id="PTHR38692">
    <property type="entry name" value="PROTEIN SMG"/>
    <property type="match status" value="1"/>
</dbReference>
<dbReference type="PANTHER" id="PTHR38692:SF1">
    <property type="entry name" value="PROTEIN SMG"/>
    <property type="match status" value="1"/>
</dbReference>
<dbReference type="Pfam" id="PF04361">
    <property type="entry name" value="DUF494"/>
    <property type="match status" value="1"/>
</dbReference>
<proteinExistence type="inferred from homology"/>
<comment type="similarity">
    <text evidence="1">Belongs to the Smg family.</text>
</comment>
<protein>
    <recommendedName>
        <fullName evidence="1">Protein Smg homolog</fullName>
    </recommendedName>
</protein>
<gene>
    <name evidence="1" type="primary">smg</name>
    <name type="ordered locus">Shewmr7_0030</name>
</gene>
<sequence length="158" mass="18808">MFDILMYLFENYVHSEVELLVDEDELTKELTRAGFHQSEILKALTWLERLAELQEGDKPYLCNHDQHSFRIYTKEEMEKLDVECRGFLLFLEQVKVLNVETREMVIDRVMELDEPALILEDLKWVILMVLFNAPGHESAYEQMEDLIFEQPEEGRLHS</sequence>
<feature type="chain" id="PRO_1000025671" description="Protein Smg homolog">
    <location>
        <begin position="1"/>
        <end position="158"/>
    </location>
</feature>
<name>SMG_SHESR</name>
<organism>
    <name type="scientific">Shewanella sp. (strain MR-7)</name>
    <dbReference type="NCBI Taxonomy" id="60481"/>
    <lineage>
        <taxon>Bacteria</taxon>
        <taxon>Pseudomonadati</taxon>
        <taxon>Pseudomonadota</taxon>
        <taxon>Gammaproteobacteria</taxon>
        <taxon>Alteromonadales</taxon>
        <taxon>Shewanellaceae</taxon>
        <taxon>Shewanella</taxon>
    </lineage>
</organism>